<sequence length="580" mass="63407">MPFHVEGLVAIILFYLLIFLVGIWAAWKTKNSGNAEERSEAIIVGGRDIGLLVGGFTMTATWVGGGYINGTAEAVYGPGCGLAWAQAPIGYSLSLILGGLFFAKPMRSKGYVTMLDPFQQIYGKRMGGLLFIPALMGEMFWAAAIFSALGATISVIIDVDVNISVIVSALIAILYTLVGGLYSVAYTDVVQLFCIFIGLWISVPFALSHPAVTDIGFTAVHAKYQSPWLGTIESVEVYTWLDNFLLLMLGGIPWQAYFQRVLSSSSATYAQVLSFLAAFGCLVMALPAICIGAIGASTDWNQTAYGFPDPKTKEEADMILPIVLQYLCPVYISFFGLGAVSAAVMSSADSSILSASSMFARNIYQLSFRQNASDKEIVWVMRITVFVFGASATAMALLTKTVYGLWYLSSDLVYIIIFPQLLCVLFIKGTNTYGAVAGYIFGLFLRITGGEPYLYLQPLIFYPGYYPDKNGIYNQRFPFKTLSMVTSFFTNICVSYLAKYLFESGTLPPKLDIFDAVVSRHSEENMDKTILVRNENIKLNELAPVKPRQSLTLSSTFTNKEALLDVDSSPEGSGTEDNLQ</sequence>
<proteinExistence type="evidence at protein level"/>
<organism>
    <name type="scientific">Rattus norvegicus</name>
    <name type="common">Rat</name>
    <dbReference type="NCBI Taxonomy" id="10116"/>
    <lineage>
        <taxon>Eukaryota</taxon>
        <taxon>Metazoa</taxon>
        <taxon>Chordata</taxon>
        <taxon>Craniata</taxon>
        <taxon>Vertebrata</taxon>
        <taxon>Euteleostomi</taxon>
        <taxon>Mammalia</taxon>
        <taxon>Eutheria</taxon>
        <taxon>Euarchontoglires</taxon>
        <taxon>Glires</taxon>
        <taxon>Rodentia</taxon>
        <taxon>Myomorpha</taxon>
        <taxon>Muroidea</taxon>
        <taxon>Muridae</taxon>
        <taxon>Murinae</taxon>
        <taxon>Rattus</taxon>
    </lineage>
</organism>
<gene>
    <name evidence="9" type="primary">Slc5a7</name>
    <name type="synonym">Cht1</name>
</gene>
<reference key="1">
    <citation type="journal article" date="2000" name="Nat. Neurosci.">
        <title>Identification and characterization of the high-affinity choline transporter.</title>
        <authorList>
            <person name="Okuda T."/>
            <person name="Haga T."/>
            <person name="Kanai Y."/>
            <person name="Endou H."/>
            <person name="Ishihara T."/>
            <person name="Katsura I."/>
        </authorList>
    </citation>
    <scope>NUCLEOTIDE SEQUENCE [MRNA]</scope>
    <scope>FUNCTION</scope>
    <scope>TRANSPORTER ACTIVITY</scope>
    <scope>ACTIVITY REGULATION</scope>
    <scope>TISSUE SPECIFICITY</scope>
    <source>
        <strain>Wistar</strain>
        <tissue>Spinal cord</tissue>
    </source>
</reference>
<reference key="2">
    <citation type="journal article" date="2003" name="J. Neurochem.">
        <title>The hemicholinium-3 sensitive high affinity choline transporter is internalized by clathrin-mediated endocytosis and is present in endosomes and synaptic vesicles.</title>
        <authorList>
            <person name="Ribeiro F.M."/>
            <person name="Alves-Silva J."/>
            <person name="Volknandt W."/>
            <person name="Martins-Silva C."/>
            <person name="Mahmud H."/>
            <person name="Wilhelm A."/>
            <person name="Gomez M.V."/>
            <person name="Rylett R.J."/>
            <person name="Ferguson S.S."/>
            <person name="Prado V.F."/>
            <person name="Prado M.A."/>
        </authorList>
    </citation>
    <scope>SUBCELLULAR LOCATION</scope>
</reference>
<reference key="3">
    <citation type="journal article" date="2007" name="Neurochem. Int.">
        <title>SEC14-like protein 1 interacts with cholinergic transporters.</title>
        <authorList>
            <person name="Ribeiro F.M."/>
            <person name="Ferreira L.T."/>
            <person name="Marion S."/>
            <person name="Fontes S."/>
            <person name="Gomez M."/>
            <person name="Ferguson S.S."/>
            <person name="Prado M.A."/>
            <person name="Prado V.F."/>
        </authorList>
    </citation>
    <scope>INTERACTION WITH SEC14L1</scope>
    <scope>REGION</scope>
</reference>
<comment type="function">
    <text evidence="1 2 4">High-affinity Na(+)-coupled choline transmembrane symporter (PubMed:10649566). Functions as an electrogenic, voltage-dependent transporter with variable charge/choline stoichiometry (By similarity). Choline uptake and choline-induced current is also Cl(-)-dependent where Cl(-) is likely a regulatory ion rather than cotransported ion (By similarity). Plays a critical role in acetylcholine (ACh) synthesis by taking up the substrate choline from the synaptic cleft into the presynaptic nerve terminals after neurotransmitter release (By similarity). SLC5A7/CHT1-mediated choline high-affinity transport in cholinergic neurons is the rate-limiting step for production of ACh, thereby facilitating communication by subsequent action potentials (By similarity). Localized predominantly in presynaptic terminal intracellular organelles, and translocated to the plasma membrane in active form in response to neuronal activity (By similarity).</text>
</comment>
<comment type="catalytic activity">
    <reaction evidence="4">
        <text>choline(out) + n Na(+)(out) = choline(in) + n Na(+)(in)</text>
        <dbReference type="Rhea" id="RHEA:76443"/>
        <dbReference type="ChEBI" id="CHEBI:15354"/>
        <dbReference type="ChEBI" id="CHEBI:29101"/>
    </reaction>
</comment>
<comment type="activity regulation">
    <text evidence="2 4">Choline uptake activity is regulated by SLC5A7/CHT1 internalization (inactive form) from the cell surface and recycling of internalized SLC5A7/CHT1 into the cell surface (active form) (By similarity). Activated by extracellular chloride ion (By similarity). Specifically inhibited by nanomolar concentrations of hemicholinium 3 (PubMed:10649566).</text>
</comment>
<comment type="subunit">
    <text evidence="2 6">Homooligomerizes at cell surface (By similarity). Interacts with SEC14L1; may regulate SLC5A7 (PubMed:17092608).</text>
</comment>
<comment type="subcellular location">
    <subcellularLocation>
        <location evidence="2">Presynaptic cell membrane</location>
        <topology evidence="8">Multi-pass membrane protein</topology>
    </subcellularLocation>
    <subcellularLocation>
        <location evidence="1">Cell projection</location>
        <location evidence="1">Axon</location>
    </subcellularLocation>
    <subcellularLocation>
        <location evidence="2">Early endosome membrane</location>
        <topology evidence="8">Multi-pass membrane protein</topology>
    </subcellularLocation>
    <subcellularLocation>
        <location evidence="5">Cytoplasmic vesicle</location>
        <location evidence="5">Secretory vesicle</location>
        <location evidence="5">Synaptic vesicle membrane</location>
        <topology evidence="8">Multi-pass membrane protein</topology>
    </subcellularLocation>
    <text evidence="5">Localized to synaptic vesicles.</text>
</comment>
<comment type="tissue specificity">
    <text evidence="4">Expressed in basal forebrain, brain stem, spinal chord, and striatum (PubMed:10649566). Specific for cholinergic neurons (PubMed:10649566).</text>
</comment>
<comment type="domain">
    <text evidence="2">The C-terminal dileucine-like motif (DKTILV) controls SLC5A7/CHT1 internalization in clathrin-coated vesicles to early endosomes as well as choline transporter activity.</text>
</comment>
<comment type="PTM">
    <text evidence="1">Phosphorylated.</text>
</comment>
<comment type="similarity">
    <text evidence="8">Belongs to the sodium:solute symporter (SSF) (TC 2.A.21) family.</text>
</comment>
<dbReference type="EMBL" id="AB030947">
    <property type="protein sequence ID" value="BAA90484.1"/>
    <property type="molecule type" value="mRNA"/>
</dbReference>
<dbReference type="RefSeq" id="NP_445973.1">
    <property type="nucleotide sequence ID" value="NM_053521.1"/>
</dbReference>
<dbReference type="SMR" id="Q9JMD7"/>
<dbReference type="FunCoup" id="Q9JMD7">
    <property type="interactions" value="78"/>
</dbReference>
<dbReference type="STRING" id="10116.ENSRNOP00000014548"/>
<dbReference type="BindingDB" id="Q9JMD7"/>
<dbReference type="ChEMBL" id="CHEMBL5797"/>
<dbReference type="TCDB" id="2.A.21.8.1">
    <property type="family name" value="the solute:sodium symporter (sss) family"/>
</dbReference>
<dbReference type="GlyCosmos" id="Q9JMD7">
    <property type="glycosylation" value="1 site, No reported glycans"/>
</dbReference>
<dbReference type="GlyGen" id="Q9JMD7">
    <property type="glycosylation" value="1 site"/>
</dbReference>
<dbReference type="iPTMnet" id="Q9JMD7"/>
<dbReference type="PhosphoSitePlus" id="Q9JMD7"/>
<dbReference type="PaxDb" id="10116-ENSRNOP00000014548"/>
<dbReference type="GeneID" id="85426"/>
<dbReference type="KEGG" id="rno:85426"/>
<dbReference type="UCSC" id="RGD:69270">
    <property type="organism name" value="rat"/>
</dbReference>
<dbReference type="AGR" id="RGD:69270"/>
<dbReference type="CTD" id="60482"/>
<dbReference type="RGD" id="69270">
    <property type="gene designation" value="Slc5a7"/>
</dbReference>
<dbReference type="eggNOG" id="KOG3761">
    <property type="taxonomic scope" value="Eukaryota"/>
</dbReference>
<dbReference type="InParanoid" id="Q9JMD7"/>
<dbReference type="PhylomeDB" id="Q9JMD7"/>
<dbReference type="Reactome" id="R-RNO-264642">
    <property type="pathway name" value="Acetylcholine Neurotransmitter Release Cycle"/>
</dbReference>
<dbReference type="Reactome" id="R-RNO-425366">
    <property type="pathway name" value="Transport of bile salts and organic acids, metal ions and amine compounds"/>
</dbReference>
<dbReference type="PRO" id="PR:Q9JMD7"/>
<dbReference type="Proteomes" id="UP000002494">
    <property type="component" value="Unplaced"/>
</dbReference>
<dbReference type="GO" id="GO:0016324">
    <property type="term" value="C:apical plasma membrane"/>
    <property type="evidence" value="ECO:0000314"/>
    <property type="project" value="RGD"/>
</dbReference>
<dbReference type="GO" id="GO:0030424">
    <property type="term" value="C:axon"/>
    <property type="evidence" value="ECO:0000314"/>
    <property type="project" value="RGD"/>
</dbReference>
<dbReference type="GO" id="GO:0045334">
    <property type="term" value="C:clathrin-coated endocytic vesicle"/>
    <property type="evidence" value="ECO:0000314"/>
    <property type="project" value="RGD"/>
</dbReference>
<dbReference type="GO" id="GO:0030425">
    <property type="term" value="C:dendrite"/>
    <property type="evidence" value="ECO:0000314"/>
    <property type="project" value="RGD"/>
</dbReference>
<dbReference type="GO" id="GO:0005769">
    <property type="term" value="C:early endosome"/>
    <property type="evidence" value="ECO:0000314"/>
    <property type="project" value="RGD"/>
</dbReference>
<dbReference type="GO" id="GO:0031901">
    <property type="term" value="C:early endosome membrane"/>
    <property type="evidence" value="ECO:0000250"/>
    <property type="project" value="UniProtKB"/>
</dbReference>
<dbReference type="GO" id="GO:0016020">
    <property type="term" value="C:membrane"/>
    <property type="evidence" value="ECO:0000266"/>
    <property type="project" value="RGD"/>
</dbReference>
<dbReference type="GO" id="GO:0031594">
    <property type="term" value="C:neuromuscular junction"/>
    <property type="evidence" value="ECO:0000266"/>
    <property type="project" value="RGD"/>
</dbReference>
<dbReference type="GO" id="GO:0043025">
    <property type="term" value="C:neuronal cell body"/>
    <property type="evidence" value="ECO:0000266"/>
    <property type="project" value="RGD"/>
</dbReference>
<dbReference type="GO" id="GO:0043204">
    <property type="term" value="C:perikaryon"/>
    <property type="evidence" value="ECO:0000314"/>
    <property type="project" value="RGD"/>
</dbReference>
<dbReference type="GO" id="GO:0005886">
    <property type="term" value="C:plasma membrane"/>
    <property type="evidence" value="ECO:0000266"/>
    <property type="project" value="RGD"/>
</dbReference>
<dbReference type="GO" id="GO:0044853">
    <property type="term" value="C:plasma membrane raft"/>
    <property type="evidence" value="ECO:0000314"/>
    <property type="project" value="RGD"/>
</dbReference>
<dbReference type="GO" id="GO:0042734">
    <property type="term" value="C:presynaptic membrane"/>
    <property type="evidence" value="ECO:0000250"/>
    <property type="project" value="UniProtKB"/>
</dbReference>
<dbReference type="GO" id="GO:0045202">
    <property type="term" value="C:synapse"/>
    <property type="evidence" value="ECO:0000318"/>
    <property type="project" value="GO_Central"/>
</dbReference>
<dbReference type="GO" id="GO:0008021">
    <property type="term" value="C:synaptic vesicle"/>
    <property type="evidence" value="ECO:0000314"/>
    <property type="project" value="RGD"/>
</dbReference>
<dbReference type="GO" id="GO:0030672">
    <property type="term" value="C:synaptic vesicle membrane"/>
    <property type="evidence" value="ECO:0000250"/>
    <property type="project" value="UniProtKB"/>
</dbReference>
<dbReference type="GO" id="GO:0033265">
    <property type="term" value="F:choline binding"/>
    <property type="evidence" value="ECO:0000266"/>
    <property type="project" value="RGD"/>
</dbReference>
<dbReference type="GO" id="GO:0015220">
    <property type="term" value="F:choline transmembrane transporter activity"/>
    <property type="evidence" value="ECO:0000314"/>
    <property type="project" value="UniProtKB"/>
</dbReference>
<dbReference type="GO" id="GO:0005307">
    <property type="term" value="F:choline:sodium symporter activity"/>
    <property type="evidence" value="ECO:0000250"/>
    <property type="project" value="UniProtKB"/>
</dbReference>
<dbReference type="GO" id="GO:0008292">
    <property type="term" value="P:acetylcholine biosynthetic process"/>
    <property type="evidence" value="ECO:0000315"/>
    <property type="project" value="UniProtKB"/>
</dbReference>
<dbReference type="GO" id="GO:0015871">
    <property type="term" value="P:choline transport"/>
    <property type="evidence" value="ECO:0000314"/>
    <property type="project" value="UniProtKB"/>
</dbReference>
<dbReference type="GO" id="GO:0001701">
    <property type="term" value="P:in utero embryonic development"/>
    <property type="evidence" value="ECO:0000266"/>
    <property type="project" value="RGD"/>
</dbReference>
<dbReference type="GO" id="GO:0007274">
    <property type="term" value="P:neuromuscular synaptic transmission"/>
    <property type="evidence" value="ECO:0000266"/>
    <property type="project" value="RGD"/>
</dbReference>
<dbReference type="GO" id="GO:0007271">
    <property type="term" value="P:synaptic transmission, cholinergic"/>
    <property type="evidence" value="ECO:0000266"/>
    <property type="project" value="RGD"/>
</dbReference>
<dbReference type="CDD" id="cd11474">
    <property type="entry name" value="SLC5sbd_CHT"/>
    <property type="match status" value="1"/>
</dbReference>
<dbReference type="FunFam" id="1.20.1730.10:FF:000008">
    <property type="entry name" value="High affinity choline transporter 1"/>
    <property type="match status" value="1"/>
</dbReference>
<dbReference type="Gene3D" id="1.20.1730.10">
    <property type="entry name" value="Sodium/glucose cotransporter"/>
    <property type="match status" value="1"/>
</dbReference>
<dbReference type="InterPro" id="IPR052244">
    <property type="entry name" value="Choline_transporter"/>
</dbReference>
<dbReference type="InterPro" id="IPR038377">
    <property type="entry name" value="Na/Glc_symporter_sf"/>
</dbReference>
<dbReference type="InterPro" id="IPR001734">
    <property type="entry name" value="Na/solute_symporter"/>
</dbReference>
<dbReference type="PANTHER" id="PTHR45897:SF2">
    <property type="entry name" value="HIGH AFFINITY CHOLINE TRANSPORTER 1"/>
    <property type="match status" value="1"/>
</dbReference>
<dbReference type="PANTHER" id="PTHR45897">
    <property type="entry name" value="HIGH-AFFINITY CHOLINE TRANSPORTER 1"/>
    <property type="match status" value="1"/>
</dbReference>
<dbReference type="Pfam" id="PF00474">
    <property type="entry name" value="SSF"/>
    <property type="match status" value="1"/>
</dbReference>
<dbReference type="PROSITE" id="PS50283">
    <property type="entry name" value="NA_SOLUT_SYMP_3"/>
    <property type="match status" value="1"/>
</dbReference>
<accession>Q9JMD7</accession>
<name>SC5A7_RAT</name>
<evidence type="ECO:0000250" key="1">
    <source>
        <dbReference type="UniProtKB" id="Q8BGY9"/>
    </source>
</evidence>
<evidence type="ECO:0000250" key="2">
    <source>
        <dbReference type="UniProtKB" id="Q9GZV3"/>
    </source>
</evidence>
<evidence type="ECO:0000255" key="3"/>
<evidence type="ECO:0000269" key="4">
    <source>
    </source>
</evidence>
<evidence type="ECO:0000269" key="5">
    <source>
    </source>
</evidence>
<evidence type="ECO:0000269" key="6">
    <source>
    </source>
</evidence>
<evidence type="ECO:0000303" key="7">
    <source>
    </source>
</evidence>
<evidence type="ECO:0000305" key="8"/>
<evidence type="ECO:0000312" key="9">
    <source>
        <dbReference type="RGD" id="69270"/>
    </source>
</evidence>
<protein>
    <recommendedName>
        <fullName evidence="7">High affinity choline transporter 1</fullName>
        <shortName evidence="7">rCHT1</shortName>
    </recommendedName>
    <alternativeName>
        <fullName evidence="2">Hemicholinium-3-sensitive choline transporter</fullName>
        <shortName evidence="2">CHT</shortName>
    </alternativeName>
    <alternativeName>
        <fullName evidence="2">Solute carrier family 5 member 7</fullName>
    </alternativeName>
</protein>
<keyword id="KW-1003">Cell membrane</keyword>
<keyword id="KW-0966">Cell projection</keyword>
<keyword id="KW-0968">Cytoplasmic vesicle</keyword>
<keyword id="KW-0967">Endosome</keyword>
<keyword id="KW-0325">Glycoprotein</keyword>
<keyword id="KW-0406">Ion transport</keyword>
<keyword id="KW-0472">Membrane</keyword>
<keyword id="KW-0530">Neurotransmitter biosynthesis</keyword>
<keyword id="KW-0597">Phosphoprotein</keyword>
<keyword id="KW-1185">Reference proteome</keyword>
<keyword id="KW-0915">Sodium</keyword>
<keyword id="KW-0739">Sodium transport</keyword>
<keyword id="KW-0769">Symport</keyword>
<keyword id="KW-0770">Synapse</keyword>
<keyword id="KW-0812">Transmembrane</keyword>
<keyword id="KW-1133">Transmembrane helix</keyword>
<keyword id="KW-0813">Transport</keyword>
<feature type="chain" id="PRO_0000105393" description="High affinity choline transporter 1">
    <location>
        <begin position="1"/>
        <end position="580"/>
    </location>
</feature>
<feature type="topological domain" description="Extracellular" evidence="3">
    <location>
        <begin position="1"/>
        <end position="6"/>
    </location>
</feature>
<feature type="transmembrane region" description="Helical" evidence="3">
    <location>
        <begin position="7"/>
        <end position="27"/>
    </location>
</feature>
<feature type="topological domain" description="Cytoplasmic" evidence="3">
    <location>
        <begin position="28"/>
        <end position="48"/>
    </location>
</feature>
<feature type="transmembrane region" description="Helical" evidence="3">
    <location>
        <begin position="49"/>
        <end position="69"/>
    </location>
</feature>
<feature type="topological domain" description="Extracellular" evidence="3">
    <location>
        <begin position="70"/>
        <end position="81"/>
    </location>
</feature>
<feature type="transmembrane region" description="Helical" evidence="3">
    <location>
        <begin position="82"/>
        <end position="102"/>
    </location>
</feature>
<feature type="topological domain" description="Cytoplasmic" evidence="3">
    <location>
        <begin position="103"/>
        <end position="125"/>
    </location>
</feature>
<feature type="transmembrane region" description="Helical" evidence="3">
    <location>
        <begin position="126"/>
        <end position="146"/>
    </location>
</feature>
<feature type="topological domain" description="Extracellular" evidence="3">
    <location>
        <begin position="147"/>
        <end position="164"/>
    </location>
</feature>
<feature type="transmembrane region" description="Helical" evidence="3">
    <location>
        <begin position="165"/>
        <end position="185"/>
    </location>
</feature>
<feature type="topological domain" description="Cytoplasmic" evidence="3">
    <location>
        <begin position="186"/>
        <end position="191"/>
    </location>
</feature>
<feature type="transmembrane region" description="Helical" evidence="3">
    <location>
        <begin position="192"/>
        <end position="212"/>
    </location>
</feature>
<feature type="topological domain" description="Extracellular" evidence="3">
    <location>
        <begin position="213"/>
        <end position="237"/>
    </location>
</feature>
<feature type="transmembrane region" description="Helical" evidence="3">
    <location>
        <begin position="238"/>
        <end position="258"/>
    </location>
</feature>
<feature type="topological domain" description="Cytoplasmic" evidence="3">
    <location>
        <begin position="259"/>
        <end position="274"/>
    </location>
</feature>
<feature type="transmembrane region" description="Helical" evidence="3">
    <location>
        <begin position="275"/>
        <end position="295"/>
    </location>
</feature>
<feature type="topological domain" description="Extracellular" evidence="3">
    <location>
        <begin position="296"/>
        <end position="317"/>
    </location>
</feature>
<feature type="transmembrane region" description="Helical" evidence="3">
    <location>
        <begin position="318"/>
        <end position="338"/>
    </location>
</feature>
<feature type="topological domain" description="Cytoplasmic" evidence="3">
    <location>
        <begin position="339"/>
        <end position="376"/>
    </location>
</feature>
<feature type="transmembrane region" description="Helical" evidence="3">
    <location>
        <begin position="377"/>
        <end position="397"/>
    </location>
</feature>
<feature type="topological domain" description="Extracellular" evidence="3">
    <location>
        <begin position="398"/>
        <end position="406"/>
    </location>
</feature>
<feature type="transmembrane region" description="Helical" evidence="3">
    <location>
        <begin position="407"/>
        <end position="427"/>
    </location>
</feature>
<feature type="topological domain" description="Cytoplasmic" evidence="3">
    <location>
        <begin position="428"/>
        <end position="435"/>
    </location>
</feature>
<feature type="transmembrane region" description="Helical" evidence="3">
    <location>
        <begin position="436"/>
        <end position="456"/>
    </location>
</feature>
<feature type="topological domain" description="Extracellular" evidence="3">
    <location>
        <begin position="457"/>
        <end position="481"/>
    </location>
</feature>
<feature type="transmembrane region" description="Helical" evidence="3">
    <location>
        <begin position="482"/>
        <end position="502"/>
    </location>
</feature>
<feature type="topological domain" description="Cytoplasmic" evidence="3">
    <location>
        <begin position="503"/>
        <end position="580"/>
    </location>
</feature>
<feature type="region of interest" description="Mediates interaction with SEC14L1" evidence="6">
    <location>
        <begin position="502"/>
        <end position="580"/>
    </location>
</feature>
<feature type="short sequence motif" description="Dileucine-like motif" evidence="2">
    <location>
        <begin position="527"/>
        <end position="532"/>
    </location>
</feature>
<feature type="glycosylation site" description="N-linked (GlcNAc...) asparagine" evidence="3">
    <location>
        <position position="301"/>
    </location>
</feature>